<feature type="chain" id="PRO_0000215823" description="Hsp90 co-chaperone HCH1">
    <location>
        <begin position="1"/>
        <end position="153"/>
    </location>
</feature>
<comment type="function">
    <text evidence="1 2 5">Co-chaperone that binds to the molecular chaperone HSP82 and stimulates its ATPase activity. Although not essential, it confers thermotolerance when intracellular levels of HSP82 are limiting.</text>
</comment>
<comment type="subunit">
    <text evidence="1 2">Monomer. Interacts with HSP82.</text>
</comment>
<comment type="subcellular location">
    <subcellularLocation>
        <location evidence="3">Cytoplasm</location>
    </subcellularLocation>
    <subcellularLocation>
        <location evidence="3">Nucleus</location>
    </subcellularLocation>
</comment>
<comment type="miscellaneous">
    <text evidence="4">Present with 8528 molecules/cell in log phase SD medium.</text>
</comment>
<comment type="similarity">
    <text evidence="6">Belongs to the AHA1 family.</text>
</comment>
<sequence length="153" mass="17246">MVVLNPNNWHWVDKNTLPWSKDYLNGKLTSLSTVSSDGKSKIELTQVSSITGDSNVSQRKGKPICYFDLQLSMNVKVTNLDTNKDDEDDDGILADGKLEIPEFMHDESDIPILSQGFDAFDGLVRSEFVPKVVETLLKYQDDLIKEHSKDIQV</sequence>
<protein>
    <recommendedName>
        <fullName>Hsp90 co-chaperone HCH1</fullName>
    </recommendedName>
    <alternativeName>
        <fullName>High-copy Hsp90 suppressor protein 1</fullName>
    </alternativeName>
</protein>
<accession>P53834</accession>
<accession>D6W0R3</accession>
<keyword id="KW-0143">Chaperone</keyword>
<keyword id="KW-0963">Cytoplasm</keyword>
<keyword id="KW-0539">Nucleus</keyword>
<keyword id="KW-1185">Reference proteome</keyword>
<evidence type="ECO:0000269" key="1">
    <source>
    </source>
</evidence>
<evidence type="ECO:0000269" key="2">
    <source>
    </source>
</evidence>
<evidence type="ECO:0000269" key="3">
    <source>
    </source>
</evidence>
<evidence type="ECO:0000269" key="4">
    <source>
    </source>
</evidence>
<evidence type="ECO:0000269" key="5">
    <source>
    </source>
</evidence>
<evidence type="ECO:0000305" key="6"/>
<name>HCH1_YEAST</name>
<proteinExistence type="evidence at protein level"/>
<reference key="1">
    <citation type="journal article" date="1997" name="Nature">
        <title>The nucleotide sequence of Saccharomyces cerevisiae chromosome XIV and its evolutionary implications.</title>
        <authorList>
            <person name="Philippsen P."/>
            <person name="Kleine K."/>
            <person name="Poehlmann R."/>
            <person name="Duesterhoeft A."/>
            <person name="Hamberg K."/>
            <person name="Hegemann J.H."/>
            <person name="Obermaier B."/>
            <person name="Urrestarazu L.A."/>
            <person name="Aert R."/>
            <person name="Albermann K."/>
            <person name="Altmann R."/>
            <person name="Andre B."/>
            <person name="Baladron V."/>
            <person name="Ballesta J.P.G."/>
            <person name="Becam A.-M."/>
            <person name="Beinhauer J.D."/>
            <person name="Boskovic J."/>
            <person name="Buitrago M.J."/>
            <person name="Bussereau F."/>
            <person name="Coster F."/>
            <person name="Crouzet M."/>
            <person name="D'Angelo M."/>
            <person name="Dal Pero F."/>
            <person name="De Antoni A."/>
            <person name="del Rey F."/>
            <person name="Doignon F."/>
            <person name="Domdey H."/>
            <person name="Dubois E."/>
            <person name="Fiedler T.A."/>
            <person name="Fleig U."/>
            <person name="Floeth M."/>
            <person name="Fritz C."/>
            <person name="Gaillardin C."/>
            <person name="Garcia-Cantalejo J.M."/>
            <person name="Glansdorff N."/>
            <person name="Goffeau A."/>
            <person name="Gueldener U."/>
            <person name="Herbert C.J."/>
            <person name="Heumann K."/>
            <person name="Heuss-Neitzel D."/>
            <person name="Hilbert H."/>
            <person name="Hinni K."/>
            <person name="Iraqui Houssaini I."/>
            <person name="Jacquet M."/>
            <person name="Jimenez A."/>
            <person name="Jonniaux J.-L."/>
            <person name="Karpfinger-Hartl L."/>
            <person name="Lanfranchi G."/>
            <person name="Lepingle A."/>
            <person name="Levesque H."/>
            <person name="Lyck R."/>
            <person name="Maftahi M."/>
            <person name="Mallet L."/>
            <person name="Maurer C.T.C."/>
            <person name="Messenguy F."/>
            <person name="Mewes H.-W."/>
            <person name="Moestl D."/>
            <person name="Nasr F."/>
            <person name="Nicaud J.-M."/>
            <person name="Niedenthal R.K."/>
            <person name="Pandolfo D."/>
            <person name="Pierard A."/>
            <person name="Piravandi E."/>
            <person name="Planta R.J."/>
            <person name="Pohl T.M."/>
            <person name="Purnelle B."/>
            <person name="Rebischung C."/>
            <person name="Remacha M.A."/>
            <person name="Revuelta J.L."/>
            <person name="Rinke M."/>
            <person name="Saiz J.E."/>
            <person name="Sartorello F."/>
            <person name="Scherens B."/>
            <person name="Sen-Gupta M."/>
            <person name="Soler-Mira A."/>
            <person name="Urbanus J.H.M."/>
            <person name="Valle G."/>
            <person name="Van Dyck L."/>
            <person name="Verhasselt P."/>
            <person name="Vierendeels F."/>
            <person name="Vissers S."/>
            <person name="Voet M."/>
            <person name="Volckaert G."/>
            <person name="Wach A."/>
            <person name="Wambutt R."/>
            <person name="Wedler H."/>
            <person name="Zollner A."/>
            <person name="Hani J."/>
        </authorList>
    </citation>
    <scope>NUCLEOTIDE SEQUENCE [LARGE SCALE GENOMIC DNA]</scope>
    <source>
        <strain>ATCC 204508 / S288c</strain>
    </source>
</reference>
<reference key="2">
    <citation type="journal article" date="2014" name="G3 (Bethesda)">
        <title>The reference genome sequence of Saccharomyces cerevisiae: Then and now.</title>
        <authorList>
            <person name="Engel S.R."/>
            <person name="Dietrich F.S."/>
            <person name="Fisk D.G."/>
            <person name="Binkley G."/>
            <person name="Balakrishnan R."/>
            <person name="Costanzo M.C."/>
            <person name="Dwight S.S."/>
            <person name="Hitz B.C."/>
            <person name="Karra K."/>
            <person name="Nash R.S."/>
            <person name="Weng S."/>
            <person name="Wong E.D."/>
            <person name="Lloyd P."/>
            <person name="Skrzypek M.S."/>
            <person name="Miyasato S.R."/>
            <person name="Simison M."/>
            <person name="Cherry J.M."/>
        </authorList>
    </citation>
    <scope>GENOME REANNOTATION</scope>
    <source>
        <strain>ATCC 204508 / S288c</strain>
    </source>
</reference>
<reference key="3">
    <citation type="journal article" date="1999" name="Proc. Natl. Acad. Sci. U.S.A.">
        <title>Identification of SSF1, CNS1, and HCH1 as multicopy suppressors of a Saccharomyces cerevisiae Hsp90 loss-of-function mutation.</title>
        <authorList>
            <person name="Nathan D.F."/>
            <person name="Vos M.H."/>
            <person name="Lindquist S."/>
        </authorList>
    </citation>
    <scope>FUNCTION IN HSP82 REGULATION</scope>
</reference>
<reference key="4">
    <citation type="journal article" date="2002" name="Mol. Cell">
        <title>Activation of the ATPase activity of hsp90 by the stress-regulated cochaperone aha1.</title>
        <authorList>
            <person name="Panaretou B."/>
            <person name="Siligardi G."/>
            <person name="Meyer P."/>
            <person name="Maloney A."/>
            <person name="Sullivan J.K."/>
            <person name="Singh S."/>
            <person name="Millson S.H."/>
            <person name="Clarke P.A."/>
            <person name="Naaby-Hansen S."/>
            <person name="Stein R."/>
            <person name="Cramer R."/>
            <person name="Mollapour M."/>
            <person name="Workman P."/>
            <person name="Piper P.W."/>
            <person name="Pearl L.H."/>
            <person name="Prodromou C."/>
        </authorList>
    </citation>
    <scope>FUNCTION</scope>
    <scope>INTERACTION WITH HSP82</scope>
</reference>
<reference key="5">
    <citation type="journal article" date="2003" name="J. Biol. Chem.">
        <title>Aha1 binds to the middle domain of Hsp90, contributes to client protein activation, and stimulates the ATPase activity of the molecular chaperone.</title>
        <authorList>
            <person name="Lotz G.P."/>
            <person name="Lin H."/>
            <person name="Harst A."/>
            <person name="Obermann W.M.J."/>
        </authorList>
    </citation>
    <scope>FUNCTION</scope>
    <scope>INTERACTION WITH HSP82</scope>
</reference>
<reference key="6">
    <citation type="journal article" date="2003" name="Nature">
        <title>Global analysis of protein localization in budding yeast.</title>
        <authorList>
            <person name="Huh W.-K."/>
            <person name="Falvo J.V."/>
            <person name="Gerke L.C."/>
            <person name="Carroll A.S."/>
            <person name="Howson R.W."/>
            <person name="Weissman J.S."/>
            <person name="O'Shea E.K."/>
        </authorList>
    </citation>
    <scope>SUBCELLULAR LOCATION [LARGE SCALE ANALYSIS]</scope>
</reference>
<reference key="7">
    <citation type="journal article" date="2003" name="Nature">
        <title>Global analysis of protein expression in yeast.</title>
        <authorList>
            <person name="Ghaemmaghami S."/>
            <person name="Huh W.-K."/>
            <person name="Bower K."/>
            <person name="Howson R.W."/>
            <person name="Belle A."/>
            <person name="Dephoure N."/>
            <person name="O'Shea E.K."/>
            <person name="Weissman J.S."/>
        </authorList>
    </citation>
    <scope>LEVEL OF PROTEIN EXPRESSION [LARGE SCALE ANALYSIS]</scope>
</reference>
<gene>
    <name type="primary">HCH1</name>
    <name type="ordered locus">YNL281W</name>
    <name type="ORF">N0589</name>
</gene>
<organism>
    <name type="scientific">Saccharomyces cerevisiae (strain ATCC 204508 / S288c)</name>
    <name type="common">Baker's yeast</name>
    <dbReference type="NCBI Taxonomy" id="559292"/>
    <lineage>
        <taxon>Eukaryota</taxon>
        <taxon>Fungi</taxon>
        <taxon>Dikarya</taxon>
        <taxon>Ascomycota</taxon>
        <taxon>Saccharomycotina</taxon>
        <taxon>Saccharomycetes</taxon>
        <taxon>Saccharomycetales</taxon>
        <taxon>Saccharomycetaceae</taxon>
        <taxon>Saccharomyces</taxon>
    </lineage>
</organism>
<dbReference type="EMBL" id="Z71557">
    <property type="protein sequence ID" value="CAA96193.1"/>
    <property type="molecule type" value="Genomic_DNA"/>
</dbReference>
<dbReference type="EMBL" id="BK006947">
    <property type="protein sequence ID" value="DAA10279.1"/>
    <property type="molecule type" value="Genomic_DNA"/>
</dbReference>
<dbReference type="PIR" id="S63255">
    <property type="entry name" value="S63255"/>
</dbReference>
<dbReference type="RefSeq" id="NP_014118.1">
    <property type="nucleotide sequence ID" value="NM_001183119.1"/>
</dbReference>
<dbReference type="SMR" id="P53834"/>
<dbReference type="BioGRID" id="35560">
    <property type="interactions" value="107"/>
</dbReference>
<dbReference type="DIP" id="DIP-4395N"/>
<dbReference type="FunCoup" id="P53834">
    <property type="interactions" value="126"/>
</dbReference>
<dbReference type="IntAct" id="P53834">
    <property type="interactions" value="33"/>
</dbReference>
<dbReference type="MINT" id="P53834"/>
<dbReference type="STRING" id="4932.YNL281W"/>
<dbReference type="iPTMnet" id="P53834"/>
<dbReference type="PaxDb" id="4932-YNL281W"/>
<dbReference type="PeptideAtlas" id="P53834"/>
<dbReference type="EnsemblFungi" id="YNL281W_mRNA">
    <property type="protein sequence ID" value="YNL281W"/>
    <property type="gene ID" value="YNL281W"/>
</dbReference>
<dbReference type="GeneID" id="855440"/>
<dbReference type="KEGG" id="sce:YNL281W"/>
<dbReference type="AGR" id="SGD:S000005225"/>
<dbReference type="SGD" id="S000005225">
    <property type="gene designation" value="HCH1"/>
</dbReference>
<dbReference type="VEuPathDB" id="FungiDB:YNL281W"/>
<dbReference type="eggNOG" id="KOG2936">
    <property type="taxonomic scope" value="Eukaryota"/>
</dbReference>
<dbReference type="HOGENOM" id="CLU_132818_0_0_1"/>
<dbReference type="InParanoid" id="P53834"/>
<dbReference type="OMA" id="EFMHDED"/>
<dbReference type="OrthoDB" id="567237at2759"/>
<dbReference type="BioCyc" id="YEAST:G3O-33272-MONOMER"/>
<dbReference type="BioGRID-ORCS" id="855440">
    <property type="hits" value="4 hits in 10 CRISPR screens"/>
</dbReference>
<dbReference type="CD-CODE" id="E03F929F">
    <property type="entry name" value="Stress granule"/>
</dbReference>
<dbReference type="PRO" id="PR:P53834"/>
<dbReference type="Proteomes" id="UP000002311">
    <property type="component" value="Chromosome XIV"/>
</dbReference>
<dbReference type="RNAct" id="P53834">
    <property type="molecule type" value="protein"/>
</dbReference>
<dbReference type="GO" id="GO:0005737">
    <property type="term" value="C:cytoplasm"/>
    <property type="evidence" value="ECO:0007005"/>
    <property type="project" value="SGD"/>
</dbReference>
<dbReference type="GO" id="GO:0005829">
    <property type="term" value="C:cytosol"/>
    <property type="evidence" value="ECO:0000318"/>
    <property type="project" value="GO_Central"/>
</dbReference>
<dbReference type="GO" id="GO:0005634">
    <property type="term" value="C:nucleus"/>
    <property type="evidence" value="ECO:0007005"/>
    <property type="project" value="SGD"/>
</dbReference>
<dbReference type="GO" id="GO:0001671">
    <property type="term" value="F:ATPase activator activity"/>
    <property type="evidence" value="ECO:0000314"/>
    <property type="project" value="SGD"/>
</dbReference>
<dbReference type="GO" id="GO:0051087">
    <property type="term" value="F:protein-folding chaperone binding"/>
    <property type="evidence" value="ECO:0000314"/>
    <property type="project" value="SGD"/>
</dbReference>
<dbReference type="GO" id="GO:0006457">
    <property type="term" value="P:protein folding"/>
    <property type="evidence" value="ECO:0000315"/>
    <property type="project" value="SGD"/>
</dbReference>
<dbReference type="FunFam" id="3.15.10.20:FF:000005">
    <property type="entry name" value="Hch1p"/>
    <property type="match status" value="1"/>
</dbReference>
<dbReference type="Gene3D" id="3.15.10.20">
    <property type="entry name" value="Activator of Hsp90 ATPase Aha1, N-terminal domain"/>
    <property type="match status" value="1"/>
</dbReference>
<dbReference type="InterPro" id="IPR036338">
    <property type="entry name" value="Aha1"/>
</dbReference>
<dbReference type="InterPro" id="IPR015310">
    <property type="entry name" value="AHSA1-like_N"/>
</dbReference>
<dbReference type="PANTHER" id="PTHR13009">
    <property type="entry name" value="HEAT SHOCK PROTEIN 90 HSP90 CO-CHAPERONE AHA-1"/>
    <property type="match status" value="1"/>
</dbReference>
<dbReference type="PANTHER" id="PTHR13009:SF15">
    <property type="entry name" value="HSP90 CO-CHAPERONE HCH1"/>
    <property type="match status" value="1"/>
</dbReference>
<dbReference type="Pfam" id="PF09229">
    <property type="entry name" value="Aha1_N"/>
    <property type="match status" value="1"/>
</dbReference>
<dbReference type="SMART" id="SM01000">
    <property type="entry name" value="Aha1_N"/>
    <property type="match status" value="1"/>
</dbReference>
<dbReference type="SUPFAM" id="SSF103111">
    <property type="entry name" value="Activator of Hsp90 ATPase, Aha1"/>
    <property type="match status" value="1"/>
</dbReference>